<dbReference type="EMBL" id="EF067921">
    <property type="protein sequence ID" value="ABK20732.1"/>
    <property type="molecule type" value="Genomic_DNA"/>
</dbReference>
<dbReference type="RefSeq" id="YP_874509.1">
    <property type="nucleotide sequence ID" value="NC_008589.1"/>
</dbReference>
<dbReference type="SMR" id="A0T0P7"/>
<dbReference type="STRING" id="35128.A0T0P7"/>
<dbReference type="GeneID" id="4524804"/>
<dbReference type="InParanoid" id="A0T0P7"/>
<dbReference type="GO" id="GO:0009535">
    <property type="term" value="C:chloroplast thylakoid membrane"/>
    <property type="evidence" value="ECO:0007669"/>
    <property type="project" value="UniProtKB-SubCell"/>
</dbReference>
<dbReference type="GO" id="GO:0015979">
    <property type="term" value="P:photosynthesis"/>
    <property type="evidence" value="ECO:0007669"/>
    <property type="project" value="InterPro"/>
</dbReference>
<dbReference type="HAMAP" id="MF_00293">
    <property type="entry name" value="PSII_PsbN"/>
    <property type="match status" value="1"/>
</dbReference>
<dbReference type="InterPro" id="IPR003398">
    <property type="entry name" value="PSII_PsbN"/>
</dbReference>
<dbReference type="PANTHER" id="PTHR35326">
    <property type="entry name" value="PROTEIN PSBN"/>
    <property type="match status" value="1"/>
</dbReference>
<dbReference type="PANTHER" id="PTHR35326:SF3">
    <property type="entry name" value="PROTEIN PSBN"/>
    <property type="match status" value="1"/>
</dbReference>
<dbReference type="Pfam" id="PF02468">
    <property type="entry name" value="PsbN"/>
    <property type="match status" value="1"/>
</dbReference>
<proteinExistence type="inferred from homology"/>
<reference key="1">
    <citation type="journal article" date="2007" name="Mol. Genet. Genomics">
        <title>Chloroplast genomes of the diatoms Phaeodactylum tricornutum and Thalassiosira pseudonana: comparison with other plastid genomes of the red lineage.</title>
        <authorList>
            <person name="Oudot-Le Secq M.-P."/>
            <person name="Grimwood J."/>
            <person name="Shapiro H."/>
            <person name="Armbrust E.V."/>
            <person name="Bowler C."/>
            <person name="Green B.R."/>
        </authorList>
    </citation>
    <scope>NUCLEOTIDE SEQUENCE [LARGE SCALE GENOMIC DNA]</scope>
    <source>
        <strain>CCMP1335 / NEPCC58 / CCAP 1085/12</strain>
    </source>
</reference>
<evidence type="ECO:0000255" key="1">
    <source>
        <dbReference type="HAMAP-Rule" id="MF_00293"/>
    </source>
</evidence>
<feature type="chain" id="PRO_0000276286" description="Protein PsbN">
    <location>
        <begin position="1"/>
        <end position="43"/>
    </location>
</feature>
<feature type="transmembrane region" description="Helical" evidence="1">
    <location>
        <begin position="4"/>
        <end position="24"/>
    </location>
</feature>
<name>PSBN_THAPS</name>
<protein>
    <recommendedName>
        <fullName evidence="1">Protein PsbN</fullName>
    </recommendedName>
</protein>
<accession>A0T0P7</accession>
<gene>
    <name evidence="1" type="primary">psbN</name>
</gene>
<sequence length="43" mass="4733">METATIIVIFVSSLLVGITAYSVYTAFGPASKNLRDPFEEHED</sequence>
<organism>
    <name type="scientific">Thalassiosira pseudonana</name>
    <name type="common">Marine diatom</name>
    <name type="synonym">Cyclotella nana</name>
    <dbReference type="NCBI Taxonomy" id="35128"/>
    <lineage>
        <taxon>Eukaryota</taxon>
        <taxon>Sar</taxon>
        <taxon>Stramenopiles</taxon>
        <taxon>Ochrophyta</taxon>
        <taxon>Bacillariophyta</taxon>
        <taxon>Coscinodiscophyceae</taxon>
        <taxon>Thalassiosirophycidae</taxon>
        <taxon>Thalassiosirales</taxon>
        <taxon>Thalassiosiraceae</taxon>
        <taxon>Thalassiosira</taxon>
    </lineage>
</organism>
<geneLocation type="chloroplast"/>
<comment type="function">
    <text evidence="1">May play a role in photosystem I and II biogenesis.</text>
</comment>
<comment type="subcellular location">
    <subcellularLocation>
        <location evidence="1">Plastid</location>
        <location evidence="1">Chloroplast thylakoid membrane</location>
        <topology evidence="1">Single-pass membrane protein</topology>
    </subcellularLocation>
</comment>
<comment type="similarity">
    <text evidence="1">Belongs to the PsbN family.</text>
</comment>
<comment type="caution">
    <text evidence="1">Originally thought to be a component of PSII; based on experiments in Synechocystis, N.tabacum and barley, and its absence from PSII in T.elongatus and T.vulcanus, this is probably not true.</text>
</comment>
<keyword id="KW-0150">Chloroplast</keyword>
<keyword id="KW-0472">Membrane</keyword>
<keyword id="KW-0934">Plastid</keyword>
<keyword id="KW-0793">Thylakoid</keyword>
<keyword id="KW-0812">Transmembrane</keyword>
<keyword id="KW-1133">Transmembrane helix</keyword>